<protein>
    <recommendedName>
        <fullName>Bacteriocin microcin B17</fullName>
        <shortName>MccB17</shortName>
    </recommendedName>
</protein>
<gene>
    <name type="primary">mcbA</name>
</gene>
<reference key="1">
    <citation type="journal article" date="1986" name="Proteins">
        <title>The DNA replication inhibitor microcin B17 is a forty-three-amino-acid protein containing sixty percent glycine.</title>
        <authorList>
            <person name="Davagnino J."/>
            <person name="Herrero M."/>
            <person name="Furlong D."/>
            <person name="Moreno F."/>
            <person name="Kolter R."/>
        </authorList>
    </citation>
    <scope>NUCLEOTIDE SEQUENCE [GENOMIC DNA]</scope>
    <scope>PARTIAL PROTEIN SEQUENCE</scope>
</reference>
<reference key="2">
    <citation type="journal article" date="1989" name="J. Bacteriol.">
        <title>DNA sequence, products, and transcriptional pattern of the genes involved in production of the DNA replication inhibitor microcin B17.</title>
        <authorList>
            <person name="Genilloud O."/>
            <person name="Moreno F."/>
            <person name="Kolter R."/>
        </authorList>
    </citation>
    <scope>NUCLEOTIDE SEQUENCE [GENOMIC DNA]</scope>
</reference>
<reference key="3">
    <citation type="journal article" date="1987" name="Mol. Microbiol.">
        <title>An E. coli promoter induced by the cessation of growth.</title>
        <authorList>
            <person name="Conell N."/>
            <person name="Han Z."/>
            <person name="Moreno F."/>
            <person name="Kolter R."/>
        </authorList>
    </citation>
    <scope>NUCLEOTIDE SEQUENCE [GENOMIC DNA] OF 1-14</scope>
</reference>
<reference key="4">
    <citation type="book" date="1993" name="Peptides 1992">
        <title>Isolation and structure elucidation of the 43-peptide antibiotic microcin B17.</title>
        <editorList>
            <person name="Schneider C.H."/>
            <person name="Eberles A.N."/>
        </editorList>
        <authorList>
            <person name="Bayer A."/>
            <person name="Stevanovic S."/>
            <person name="Freund S."/>
            <person name="Metzger J.W."/>
            <person name="Jung G."/>
        </authorList>
    </citation>
    <scope>PROTEIN SEQUENCE OF 27-69</scope>
</reference>
<reference key="5">
    <citation type="journal article" date="1994" name="Proc. Natl. Acad. Sci. U.S.A.">
        <title>Posttranslational modifications in microcin B17 define an additional class of DNA gyrase inhibitor.</title>
        <authorList>
            <person name="Yorgey P."/>
            <person name="Lee J."/>
            <person name="Koerdel J."/>
            <person name="Vivas E."/>
            <person name="Warner P."/>
            <person name="Jebaratnam D."/>
            <person name="Kolter R."/>
        </authorList>
    </citation>
    <scope>PROTEIN SEQUENCE OF 27-38</scope>
    <scope>POST-TRANSLATIONAL MODIFICATIONS</scope>
</reference>
<reference key="6">
    <citation type="journal article" date="1991" name="EMBO J.">
        <title>The peptide antibiotic microcin B17 induces double-strand cleavage of DNA mediated by E. coli DNA gyrase.</title>
        <authorList>
            <person name="Vizan J.L."/>
            <person name="Hernandez-Chico C."/>
            <person name="del Castillo I."/>
            <person name="Moreno F."/>
        </authorList>
    </citation>
    <scope>FUNCTION</scope>
</reference>
<reference key="7">
    <citation type="journal article" date="1998" name="Chem. Biol.">
        <title>Role of the microcin B17 propeptide in substrate recognition: solution structure and mutational analysis of McbA1-26.</title>
        <authorList>
            <person name="Roy R.S."/>
            <person name="Kim S."/>
            <person name="Baleja J.D."/>
            <person name="Walsh C.T."/>
        </authorList>
    </citation>
    <scope>STRUCTURE BY NMR OF 1-26</scope>
</reference>
<organism>
    <name type="scientific">Escherichia coli</name>
    <dbReference type="NCBI Taxonomy" id="562"/>
    <lineage>
        <taxon>Bacteria</taxon>
        <taxon>Pseudomonadati</taxon>
        <taxon>Pseudomonadota</taxon>
        <taxon>Gammaproteobacteria</taxon>
        <taxon>Enterobacterales</taxon>
        <taxon>Enterobacteriaceae</taxon>
        <taxon>Escherichia</taxon>
    </lineage>
</organism>
<dbReference type="EMBL" id="M15469">
    <property type="protein sequence ID" value="AAA24141.1"/>
    <property type="molecule type" value="Genomic_DNA"/>
</dbReference>
<dbReference type="EMBL" id="M24253">
    <property type="protein sequence ID" value="AAA72741.1"/>
    <property type="molecule type" value="Genomic_DNA"/>
</dbReference>
<dbReference type="EMBL" id="X06417">
    <property type="protein sequence ID" value="CAA29725.1"/>
    <property type="molecule type" value="Genomic_DNA"/>
</dbReference>
<dbReference type="PIR" id="A25219">
    <property type="entry name" value="MIEC77"/>
</dbReference>
<dbReference type="PIR" id="A58375">
    <property type="entry name" value="A58375"/>
</dbReference>
<dbReference type="RefSeq" id="WP_001535752.1">
    <property type="nucleotide sequence ID" value="NZ_WAII01000039.1"/>
</dbReference>
<dbReference type="PDB" id="2MLP">
    <property type="method" value="NMR"/>
    <property type="chains" value="A=1-26"/>
</dbReference>
<dbReference type="PDB" id="6GOS">
    <property type="method" value="X-ray"/>
    <property type="resolution" value="2.10 A"/>
    <property type="chains" value="A=1-69"/>
</dbReference>
<dbReference type="PDB" id="6GRG">
    <property type="method" value="X-ray"/>
    <property type="resolution" value="2.35 A"/>
    <property type="chains" value="A=1-69"/>
</dbReference>
<dbReference type="PDB" id="6GRH">
    <property type="method" value="X-ray"/>
    <property type="resolution" value="1.85 A"/>
    <property type="chains" value="A=1-46"/>
</dbReference>
<dbReference type="PDBsum" id="2MLP"/>
<dbReference type="PDBsum" id="6GOS"/>
<dbReference type="PDBsum" id="6GRG"/>
<dbReference type="PDBsum" id="6GRH"/>
<dbReference type="SMR" id="P05834"/>
<dbReference type="EvolutionaryTrace" id="P05834"/>
<dbReference type="GO" id="GO:0042742">
    <property type="term" value="P:defense response to bacterium"/>
    <property type="evidence" value="ECO:0007669"/>
    <property type="project" value="UniProtKB-KW"/>
</dbReference>
<dbReference type="GO" id="GO:0031640">
    <property type="term" value="P:killing of cells of another organism"/>
    <property type="evidence" value="ECO:0007669"/>
    <property type="project" value="UniProtKB-KW"/>
</dbReference>
<dbReference type="GO" id="GO:0008156">
    <property type="term" value="P:negative regulation of DNA replication"/>
    <property type="evidence" value="ECO:0007669"/>
    <property type="project" value="UniProtKB-KW"/>
</dbReference>
<dbReference type="NCBIfam" id="NF041037">
    <property type="entry name" value="microcin_B17"/>
    <property type="match status" value="1"/>
</dbReference>
<sequence>MELKASEFGVVLSVDALKLSRQSPLGVGIGGGGGGGGGGSCGGQGGGCGGCSNGCSGGNGGSGGSGSHI</sequence>
<proteinExistence type="evidence at protein level"/>
<feature type="propeptide" id="PRO_0000002772" evidence="2 3">
    <location>
        <begin position="1"/>
        <end position="26"/>
    </location>
</feature>
<feature type="chain" id="PRO_0000002773" description="Bacteriocin microcin B17">
    <location>
        <begin position="27"/>
        <end position="69"/>
    </location>
</feature>
<feature type="cross-link" description="Oxazole-4-carboxylic acid (Gly-Ser)" evidence="2">
    <location>
        <begin position="39"/>
        <end position="40"/>
    </location>
</feature>
<feature type="cross-link" description="Thiazole-4-carboxylic acid (Ser-Cys)" evidence="2">
    <location>
        <begin position="40"/>
        <end position="41"/>
    </location>
</feature>
<feature type="cross-link" description="Thiazole-4-carboxylic acid (Gly-Cys)" evidence="2">
    <location>
        <begin position="47"/>
        <end position="48"/>
    </location>
</feature>
<feature type="cross-link" description="Thiazole-4-carboxylic acid (Gly-Cys)" evidence="2">
    <location>
        <begin position="50"/>
        <end position="51"/>
    </location>
</feature>
<feature type="cross-link" description="Thiazole-4-carboxylic acid (Gly-Cys)" evidence="2">
    <location>
        <begin position="54"/>
        <end position="55"/>
    </location>
</feature>
<feature type="cross-link" description="Oxazole-4-carboxylic acid (Cys-Ser)" evidence="2">
    <location>
        <begin position="55"/>
        <end position="56"/>
    </location>
</feature>
<feature type="cross-link" description="Oxazole-4-carboxylic acid (Gly-Ser)" evidence="2">
    <location>
        <begin position="61"/>
        <end position="62"/>
    </location>
</feature>
<feature type="cross-link" description="Oxazole-4-carboxylic acid (Gly-Ser)" evidence="2">
    <location>
        <begin position="64"/>
        <end position="65"/>
    </location>
</feature>
<feature type="strand" evidence="5">
    <location>
        <begin position="9"/>
        <end position="14"/>
    </location>
</feature>
<feature type="helix" evidence="5">
    <location>
        <begin position="16"/>
        <end position="20"/>
    </location>
</feature>
<feature type="strand" evidence="4">
    <location>
        <begin position="22"/>
        <end position="24"/>
    </location>
</feature>
<accession>P05834</accession>
<accession>Q7M024</accession>
<geneLocation type="plasmid">
    <name>IncFII pMccB17</name>
</geneLocation>
<keyword id="KW-0002">3D-structure</keyword>
<keyword id="KW-0044">Antibiotic</keyword>
<keyword id="KW-0929">Antimicrobial</keyword>
<keyword id="KW-0078">Bacteriocin</keyword>
<keyword id="KW-0903">Direct protein sequencing</keyword>
<keyword id="KW-0236">DNA replication inhibitor</keyword>
<keyword id="KW-0614">Plasmid</keyword>
<keyword id="KW-0883">Thioether bond</keyword>
<evidence type="ECO:0000269" key="1">
    <source>
    </source>
</evidence>
<evidence type="ECO:0000269" key="2">
    <source>
    </source>
</evidence>
<evidence type="ECO:0000269" key="3">
    <source ref="4"/>
</evidence>
<evidence type="ECO:0007829" key="4">
    <source>
        <dbReference type="PDB" id="2MLP"/>
    </source>
</evidence>
<evidence type="ECO:0007829" key="5">
    <source>
        <dbReference type="PDB" id="6GRH"/>
    </source>
</evidence>
<name>MCBA_ECOLX</name>
<comment type="function">
    <text evidence="1">This glycine-rich peptide antibiotic inhibits DNA replication in many enteric bacteria, that leads to induction of the SOS repair system, massive DNA degradation and cell death. B17 inhibits type II topoisomerase by trapping an enzyme - DNA cleavable complex.</text>
</comment>
<comment type="PTM">
    <text>The processed N-terminus does not resemble a typical secretion signal sequence.</text>
</comment>
<comment type="PTM">
    <text>Maturation of thiazole and oxazole containing antibiotics involves the enzymatic condensation of a Cys, Ser or Thr with the alpha-carbonyl of the preceding amino acid to form a thioether or ether bond, then dehydration to form a double bond with the alpha-amino nitrogen. Thiazoline or oxazoline rings are dehydrogenated to form thiazole or oxazole rings.</text>
</comment>